<name>PSD_ECOSM</name>
<organism>
    <name type="scientific">Escherichia coli (strain SMS-3-5 / SECEC)</name>
    <dbReference type="NCBI Taxonomy" id="439855"/>
    <lineage>
        <taxon>Bacteria</taxon>
        <taxon>Pseudomonadati</taxon>
        <taxon>Pseudomonadota</taxon>
        <taxon>Gammaproteobacteria</taxon>
        <taxon>Enterobacterales</taxon>
        <taxon>Enterobacteriaceae</taxon>
        <taxon>Escherichia</taxon>
    </lineage>
</organism>
<protein>
    <recommendedName>
        <fullName evidence="1">Phosphatidylserine decarboxylase proenzyme</fullName>
        <ecNumber evidence="1">4.1.1.65</ecNumber>
    </recommendedName>
    <component>
        <recommendedName>
            <fullName evidence="1">Phosphatidylserine decarboxylase alpha chain</fullName>
        </recommendedName>
    </component>
    <component>
        <recommendedName>
            <fullName evidence="1">Phosphatidylserine decarboxylase beta chain</fullName>
        </recommendedName>
    </component>
</protein>
<comment type="function">
    <text evidence="1">Catalyzes the formation of phosphatidylethanolamine (PtdEtn) from phosphatidylserine (PtdSer).</text>
</comment>
<comment type="catalytic activity">
    <reaction evidence="1">
        <text>a 1,2-diacyl-sn-glycero-3-phospho-L-serine + H(+) = a 1,2-diacyl-sn-glycero-3-phosphoethanolamine + CO2</text>
        <dbReference type="Rhea" id="RHEA:20828"/>
        <dbReference type="ChEBI" id="CHEBI:15378"/>
        <dbReference type="ChEBI" id="CHEBI:16526"/>
        <dbReference type="ChEBI" id="CHEBI:57262"/>
        <dbReference type="ChEBI" id="CHEBI:64612"/>
        <dbReference type="EC" id="4.1.1.65"/>
    </reaction>
</comment>
<comment type="cofactor">
    <cofactor evidence="1">
        <name>pyruvate</name>
        <dbReference type="ChEBI" id="CHEBI:15361"/>
    </cofactor>
    <text evidence="1">Binds 1 pyruvoyl group covalently per subunit.</text>
</comment>
<comment type="pathway">
    <text evidence="1">Phospholipid metabolism; phosphatidylethanolamine biosynthesis; phosphatidylethanolamine from CDP-diacylglycerol: step 2/2.</text>
</comment>
<comment type="subunit">
    <text evidence="1">Heterodimer of a large membrane-associated beta subunit and a small pyruvoyl-containing alpha subunit.</text>
</comment>
<comment type="subcellular location">
    <subcellularLocation>
        <location evidence="1">Cell membrane</location>
        <topology evidence="1">Peripheral membrane protein</topology>
    </subcellularLocation>
</comment>
<comment type="PTM">
    <text evidence="1">Is synthesized initially as an inactive proenzyme. Formation of the active enzyme involves a self-maturation process in which the active site pyruvoyl group is generated from an internal serine residue via an autocatalytic post-translational modification. Two non-identical subunits are generated from the proenzyme in this reaction, and the pyruvate is formed at the N-terminus of the alpha chain, which is derived from the carboxyl end of the proenzyme. The autoendoproteolytic cleavage occurs by a canonical serine protease mechanism, in which the side chain hydroxyl group of the serine supplies its oxygen atom to form the C-terminus of the beta chain, while the remainder of the serine residue undergoes an oxidative deamination to produce ammonia and the pyruvoyl prosthetic group on the alpha chain. During this reaction, the Ser that is part of the protease active site of the proenzyme becomes the pyruvoyl prosthetic group, which constitutes an essential element of the active site of the mature decarboxylase.</text>
</comment>
<comment type="similarity">
    <text evidence="1">Belongs to the phosphatidylserine decarboxylase family. PSD-B subfamily. Prokaryotic type I sub-subfamily.</text>
</comment>
<keyword id="KW-1003">Cell membrane</keyword>
<keyword id="KW-0210">Decarboxylase</keyword>
<keyword id="KW-0444">Lipid biosynthesis</keyword>
<keyword id="KW-0443">Lipid metabolism</keyword>
<keyword id="KW-0456">Lyase</keyword>
<keyword id="KW-0472">Membrane</keyword>
<keyword id="KW-0594">Phospholipid biosynthesis</keyword>
<keyword id="KW-1208">Phospholipid metabolism</keyword>
<keyword id="KW-0670">Pyruvate</keyword>
<keyword id="KW-0865">Zymogen</keyword>
<dbReference type="EC" id="4.1.1.65" evidence="1"/>
<dbReference type="EMBL" id="CP000970">
    <property type="protein sequence ID" value="ACB18882.1"/>
    <property type="molecule type" value="Genomic_DNA"/>
</dbReference>
<dbReference type="SMR" id="B1LQI3"/>
<dbReference type="KEGG" id="ecm:EcSMS35_4631"/>
<dbReference type="HOGENOM" id="CLU_029061_4_1_6"/>
<dbReference type="UniPathway" id="UPA00558">
    <property type="reaction ID" value="UER00616"/>
</dbReference>
<dbReference type="Proteomes" id="UP000007011">
    <property type="component" value="Chromosome"/>
</dbReference>
<dbReference type="GO" id="GO:0005886">
    <property type="term" value="C:plasma membrane"/>
    <property type="evidence" value="ECO:0007669"/>
    <property type="project" value="UniProtKB-SubCell"/>
</dbReference>
<dbReference type="GO" id="GO:0004609">
    <property type="term" value="F:phosphatidylserine decarboxylase activity"/>
    <property type="evidence" value="ECO:0007669"/>
    <property type="project" value="UniProtKB-UniRule"/>
</dbReference>
<dbReference type="GO" id="GO:0006646">
    <property type="term" value="P:phosphatidylethanolamine biosynthetic process"/>
    <property type="evidence" value="ECO:0007669"/>
    <property type="project" value="UniProtKB-UniRule"/>
</dbReference>
<dbReference type="HAMAP" id="MF_00662">
    <property type="entry name" value="PS_decarb_PSD_B_type1"/>
    <property type="match status" value="1"/>
</dbReference>
<dbReference type="InterPro" id="IPR003817">
    <property type="entry name" value="PS_Dcarbxylase"/>
</dbReference>
<dbReference type="InterPro" id="IPR033177">
    <property type="entry name" value="PSD-B"/>
</dbReference>
<dbReference type="InterPro" id="IPR033178">
    <property type="entry name" value="PSD_type1_pro"/>
</dbReference>
<dbReference type="NCBIfam" id="TIGR00163">
    <property type="entry name" value="PS_decarb"/>
    <property type="match status" value="1"/>
</dbReference>
<dbReference type="PANTHER" id="PTHR10067">
    <property type="entry name" value="PHOSPHATIDYLSERINE DECARBOXYLASE"/>
    <property type="match status" value="1"/>
</dbReference>
<dbReference type="PANTHER" id="PTHR10067:SF6">
    <property type="entry name" value="PHOSPHATIDYLSERINE DECARBOXYLASE PROENZYME, MITOCHONDRIAL"/>
    <property type="match status" value="1"/>
</dbReference>
<dbReference type="Pfam" id="PF02666">
    <property type="entry name" value="PS_Dcarbxylase"/>
    <property type="match status" value="1"/>
</dbReference>
<proteinExistence type="inferred from homology"/>
<reference key="1">
    <citation type="journal article" date="2008" name="J. Bacteriol.">
        <title>Insights into the environmental resistance gene pool from the genome sequence of the multidrug-resistant environmental isolate Escherichia coli SMS-3-5.</title>
        <authorList>
            <person name="Fricke W.F."/>
            <person name="Wright M.S."/>
            <person name="Lindell A.H."/>
            <person name="Harkins D.M."/>
            <person name="Baker-Austin C."/>
            <person name="Ravel J."/>
            <person name="Stepanauskas R."/>
        </authorList>
    </citation>
    <scope>NUCLEOTIDE SEQUENCE [LARGE SCALE GENOMIC DNA]</scope>
    <source>
        <strain>SMS-3-5 / SECEC</strain>
    </source>
</reference>
<sequence length="322" mass="35934">MLNSFKLSLQYILPKLWLTRLAGWGASKRAGWLTKLVIDLFVKYYKVDMKEAQKPDTASYRTFNEFFVRPLRDEVRPIDTDPNVLVMPADGVISQLGKIEEDKILQAKGHNYSLEALLAGNYLMADLFRNGTFVTTYLSPRDYHRVHMPCNGILREMIYVPGDLFSVNHLTAQNVPNLFARNERVICLFDTEFGPMAQILVGATIVGSIETVWAGTITPPREGIIKRWTWPAGENDGSVALLKGQEMGRFKLGSTVINLFAPGKVNLVEQLESLSVTKIGQPLAVSTETFVTPDAEPAPLPAEEIEAEHDASPLVDDKKDQV</sequence>
<accession>B1LQI3</accession>
<feature type="chain" id="PRO_1000131372" description="Phosphatidylserine decarboxylase beta chain" evidence="1">
    <location>
        <begin position="1"/>
        <end position="253"/>
    </location>
</feature>
<feature type="chain" id="PRO_1000131373" description="Phosphatidylserine decarboxylase alpha chain" evidence="1">
    <location>
        <begin position="254"/>
        <end position="322"/>
    </location>
</feature>
<feature type="region of interest" description="Disordered" evidence="2">
    <location>
        <begin position="293"/>
        <end position="322"/>
    </location>
</feature>
<feature type="compositionally biased region" description="Basic and acidic residues" evidence="2">
    <location>
        <begin position="308"/>
        <end position="322"/>
    </location>
</feature>
<feature type="active site" description="Charge relay system; for autoendoproteolytic cleavage activity" evidence="1">
    <location>
        <position position="90"/>
    </location>
</feature>
<feature type="active site" description="Charge relay system; for autoendoproteolytic cleavage activity" evidence="1">
    <location>
        <position position="147"/>
    </location>
</feature>
<feature type="active site" description="Charge relay system; for autoendoproteolytic cleavage activity" evidence="1">
    <location>
        <position position="254"/>
    </location>
</feature>
<feature type="active site" description="Schiff-base intermediate with substrate; via pyruvic acid; for decarboxylase activity" evidence="1">
    <location>
        <position position="254"/>
    </location>
</feature>
<feature type="site" description="Cleavage (non-hydrolytic); by autocatalysis" evidence="1">
    <location>
        <begin position="253"/>
        <end position="254"/>
    </location>
</feature>
<feature type="modified residue" description="Pyruvic acid (Ser); by autocatalysis" evidence="1">
    <location>
        <position position="254"/>
    </location>
</feature>
<evidence type="ECO:0000255" key="1">
    <source>
        <dbReference type="HAMAP-Rule" id="MF_00662"/>
    </source>
</evidence>
<evidence type="ECO:0000256" key="2">
    <source>
        <dbReference type="SAM" id="MobiDB-lite"/>
    </source>
</evidence>
<gene>
    <name evidence="1" type="primary">psd</name>
    <name type="ordered locus">EcSMS35_4631</name>
</gene>